<keyword id="KW-0131">Cell cycle</keyword>
<keyword id="KW-0132">Cell division</keyword>
<keyword id="KW-0143">Chaperone</keyword>
<keyword id="KW-0963">Cytoplasm</keyword>
<keyword id="KW-0413">Isomerase</keyword>
<keyword id="KW-0697">Rotamase</keyword>
<name>TIG_STRPF</name>
<accession>Q1J4W9</accession>
<sequence>MISRIKSFKNALNYDKMNCIEIILRRNDLMSTSFENKATNRGVITFTISQDKIKPALDKAFNKIKKDLNAPGFRKGHMPRPVFNQKFGEEVLYEDALNIVLPEAYEAAVTELGLDVVAQPKIDVVSMEKGKEWTLSAEVVTKPEVKLGDYKNLVVEVDASKEVSDEDVDAKIERERQNLAELIIKDGEAAQGDTVVIDFVGSVDGVEFDGGKGDNFSLELGSGQFIPGFEDQLVGAKAGDEVEVNVTFPESYQAEDLAGKAAKFMTTIHEVKTKEVPELDDELAKDIDEDVDTLEDLKVKYRKELEAAQETAYDDAVEGAAIELAVANAEIVDLPEEMIHEEVNRSVNEFMGNMQRQGISPEMYFQLTGTTQEDLHNQYSAEADKRVKTNLVIEAIAKAEGFEATDSEIEQEINDLATEYNMPADQVRSLLSADMLKHDIAMKKAVEVITSTASVK</sequence>
<protein>
    <recommendedName>
        <fullName evidence="1">Trigger factor</fullName>
        <shortName evidence="1">TF</shortName>
        <ecNumber evidence="1">5.2.1.8</ecNumber>
    </recommendedName>
    <alternativeName>
        <fullName evidence="1">PPIase</fullName>
    </alternativeName>
</protein>
<evidence type="ECO:0000255" key="1">
    <source>
        <dbReference type="HAMAP-Rule" id="MF_00303"/>
    </source>
</evidence>
<gene>
    <name evidence="1" type="primary">tig</name>
    <name type="ordered locus">MGAS10750_Spy1667</name>
</gene>
<feature type="chain" id="PRO_0000256630" description="Trigger factor">
    <location>
        <begin position="1"/>
        <end position="456"/>
    </location>
</feature>
<feature type="domain" description="PPIase FKBP-type" evidence="1">
    <location>
        <begin position="192"/>
        <end position="277"/>
    </location>
</feature>
<comment type="function">
    <text evidence="1">Involved in protein export. Acts as a chaperone by maintaining the newly synthesized protein in an open conformation. Functions as a peptidyl-prolyl cis-trans isomerase.</text>
</comment>
<comment type="catalytic activity">
    <reaction evidence="1">
        <text>[protein]-peptidylproline (omega=180) = [protein]-peptidylproline (omega=0)</text>
        <dbReference type="Rhea" id="RHEA:16237"/>
        <dbReference type="Rhea" id="RHEA-COMP:10747"/>
        <dbReference type="Rhea" id="RHEA-COMP:10748"/>
        <dbReference type="ChEBI" id="CHEBI:83833"/>
        <dbReference type="ChEBI" id="CHEBI:83834"/>
        <dbReference type="EC" id="5.2.1.8"/>
    </reaction>
</comment>
<comment type="subcellular location">
    <subcellularLocation>
        <location>Cytoplasm</location>
    </subcellularLocation>
    <text evidence="1">About half TF is bound to the ribosome near the polypeptide exit tunnel while the other half is free in the cytoplasm.</text>
</comment>
<comment type="domain">
    <text evidence="1">Consists of 3 domains; the N-terminus binds the ribosome, the middle domain has PPIase activity, while the C-terminus has intrinsic chaperone activity on its own.</text>
</comment>
<comment type="similarity">
    <text evidence="1">Belongs to the FKBP-type PPIase family. Tig subfamily.</text>
</comment>
<proteinExistence type="inferred from homology"/>
<reference key="1">
    <citation type="journal article" date="2006" name="Proc. Natl. Acad. Sci. U.S.A.">
        <title>Molecular genetic anatomy of inter- and intraserotype variation in the human bacterial pathogen group A Streptococcus.</title>
        <authorList>
            <person name="Beres S.B."/>
            <person name="Richter E.W."/>
            <person name="Nagiec M.J."/>
            <person name="Sumby P."/>
            <person name="Porcella S.F."/>
            <person name="DeLeo F.R."/>
            <person name="Musser J.M."/>
        </authorList>
    </citation>
    <scope>NUCLEOTIDE SEQUENCE [LARGE SCALE GENOMIC DNA]</scope>
    <source>
        <strain>MGAS10750</strain>
    </source>
</reference>
<organism>
    <name type="scientific">Streptococcus pyogenes serotype M4 (strain MGAS10750)</name>
    <dbReference type="NCBI Taxonomy" id="370554"/>
    <lineage>
        <taxon>Bacteria</taxon>
        <taxon>Bacillati</taxon>
        <taxon>Bacillota</taxon>
        <taxon>Bacilli</taxon>
        <taxon>Lactobacillales</taxon>
        <taxon>Streptococcaceae</taxon>
        <taxon>Streptococcus</taxon>
    </lineage>
</organism>
<dbReference type="EC" id="5.2.1.8" evidence="1"/>
<dbReference type="EMBL" id="CP000262">
    <property type="protein sequence ID" value="ABF38617.1"/>
    <property type="molecule type" value="Genomic_DNA"/>
</dbReference>
<dbReference type="SMR" id="Q1J4W9"/>
<dbReference type="KEGG" id="spi:MGAS10750_Spy1667"/>
<dbReference type="HOGENOM" id="CLU_033058_3_2_9"/>
<dbReference type="Proteomes" id="UP000002434">
    <property type="component" value="Chromosome"/>
</dbReference>
<dbReference type="GO" id="GO:0005737">
    <property type="term" value="C:cytoplasm"/>
    <property type="evidence" value="ECO:0007669"/>
    <property type="project" value="UniProtKB-SubCell"/>
</dbReference>
<dbReference type="GO" id="GO:0003755">
    <property type="term" value="F:peptidyl-prolyl cis-trans isomerase activity"/>
    <property type="evidence" value="ECO:0007669"/>
    <property type="project" value="UniProtKB-UniRule"/>
</dbReference>
<dbReference type="GO" id="GO:0044183">
    <property type="term" value="F:protein folding chaperone"/>
    <property type="evidence" value="ECO:0007669"/>
    <property type="project" value="TreeGrafter"/>
</dbReference>
<dbReference type="GO" id="GO:0043022">
    <property type="term" value="F:ribosome binding"/>
    <property type="evidence" value="ECO:0007669"/>
    <property type="project" value="TreeGrafter"/>
</dbReference>
<dbReference type="GO" id="GO:0051083">
    <property type="term" value="P:'de novo' cotranslational protein folding"/>
    <property type="evidence" value="ECO:0007669"/>
    <property type="project" value="TreeGrafter"/>
</dbReference>
<dbReference type="GO" id="GO:0051301">
    <property type="term" value="P:cell division"/>
    <property type="evidence" value="ECO:0007669"/>
    <property type="project" value="UniProtKB-KW"/>
</dbReference>
<dbReference type="GO" id="GO:0061077">
    <property type="term" value="P:chaperone-mediated protein folding"/>
    <property type="evidence" value="ECO:0007669"/>
    <property type="project" value="TreeGrafter"/>
</dbReference>
<dbReference type="GO" id="GO:0015031">
    <property type="term" value="P:protein transport"/>
    <property type="evidence" value="ECO:0007669"/>
    <property type="project" value="UniProtKB-UniRule"/>
</dbReference>
<dbReference type="GO" id="GO:0043335">
    <property type="term" value="P:protein unfolding"/>
    <property type="evidence" value="ECO:0007669"/>
    <property type="project" value="TreeGrafter"/>
</dbReference>
<dbReference type="FunFam" id="3.10.50.40:FF:000001">
    <property type="entry name" value="Trigger factor"/>
    <property type="match status" value="1"/>
</dbReference>
<dbReference type="Gene3D" id="3.10.50.40">
    <property type="match status" value="1"/>
</dbReference>
<dbReference type="Gene3D" id="3.30.70.1050">
    <property type="entry name" value="Trigger factor ribosome-binding domain"/>
    <property type="match status" value="1"/>
</dbReference>
<dbReference type="Gene3D" id="1.10.3120.10">
    <property type="entry name" value="Trigger factor, C-terminal domain"/>
    <property type="match status" value="1"/>
</dbReference>
<dbReference type="HAMAP" id="MF_00303">
    <property type="entry name" value="Trigger_factor_Tig"/>
    <property type="match status" value="1"/>
</dbReference>
<dbReference type="InterPro" id="IPR046357">
    <property type="entry name" value="PPIase_dom_sf"/>
</dbReference>
<dbReference type="InterPro" id="IPR001179">
    <property type="entry name" value="PPIase_FKBP_dom"/>
</dbReference>
<dbReference type="InterPro" id="IPR005215">
    <property type="entry name" value="Trig_fac"/>
</dbReference>
<dbReference type="InterPro" id="IPR008880">
    <property type="entry name" value="Trigger_fac_C"/>
</dbReference>
<dbReference type="InterPro" id="IPR037041">
    <property type="entry name" value="Trigger_fac_C_sf"/>
</dbReference>
<dbReference type="InterPro" id="IPR008881">
    <property type="entry name" value="Trigger_fac_ribosome-bd_bac"/>
</dbReference>
<dbReference type="InterPro" id="IPR036611">
    <property type="entry name" value="Trigger_fac_ribosome-bd_sf"/>
</dbReference>
<dbReference type="InterPro" id="IPR027304">
    <property type="entry name" value="Trigger_fact/SurA_dom_sf"/>
</dbReference>
<dbReference type="NCBIfam" id="TIGR00115">
    <property type="entry name" value="tig"/>
    <property type="match status" value="1"/>
</dbReference>
<dbReference type="PANTHER" id="PTHR30560">
    <property type="entry name" value="TRIGGER FACTOR CHAPERONE AND PEPTIDYL-PROLYL CIS/TRANS ISOMERASE"/>
    <property type="match status" value="1"/>
</dbReference>
<dbReference type="PANTHER" id="PTHR30560:SF3">
    <property type="entry name" value="TRIGGER FACTOR-LIKE PROTEIN TIG, CHLOROPLASTIC"/>
    <property type="match status" value="1"/>
</dbReference>
<dbReference type="Pfam" id="PF00254">
    <property type="entry name" value="FKBP_C"/>
    <property type="match status" value="1"/>
</dbReference>
<dbReference type="Pfam" id="PF05698">
    <property type="entry name" value="Trigger_C"/>
    <property type="match status" value="1"/>
</dbReference>
<dbReference type="Pfam" id="PF05697">
    <property type="entry name" value="Trigger_N"/>
    <property type="match status" value="1"/>
</dbReference>
<dbReference type="PIRSF" id="PIRSF003095">
    <property type="entry name" value="Trigger_factor"/>
    <property type="match status" value="1"/>
</dbReference>
<dbReference type="SUPFAM" id="SSF54534">
    <property type="entry name" value="FKBP-like"/>
    <property type="match status" value="1"/>
</dbReference>
<dbReference type="SUPFAM" id="SSF109998">
    <property type="entry name" value="Triger factor/SurA peptide-binding domain-like"/>
    <property type="match status" value="1"/>
</dbReference>
<dbReference type="SUPFAM" id="SSF102735">
    <property type="entry name" value="Trigger factor ribosome-binding domain"/>
    <property type="match status" value="1"/>
</dbReference>
<dbReference type="PROSITE" id="PS50059">
    <property type="entry name" value="FKBP_PPIASE"/>
    <property type="match status" value="1"/>
</dbReference>